<organism>
    <name type="scientific">Shigella dysenteriae serotype 1 (strain Sd197)</name>
    <dbReference type="NCBI Taxonomy" id="300267"/>
    <lineage>
        <taxon>Bacteria</taxon>
        <taxon>Pseudomonadati</taxon>
        <taxon>Pseudomonadota</taxon>
        <taxon>Gammaproteobacteria</taxon>
        <taxon>Enterobacterales</taxon>
        <taxon>Enterobacteriaceae</taxon>
        <taxon>Shigella</taxon>
    </lineage>
</organism>
<dbReference type="EC" id="3.4.22.-"/>
<dbReference type="EMBL" id="CP000035">
    <property type="protein sequence ID" value="ABB64724.1"/>
    <property type="molecule type" value="Genomic_DNA"/>
</dbReference>
<dbReference type="RefSeq" id="WP_001195011.1">
    <property type="nucleotide sequence ID" value="NC_007607.1"/>
</dbReference>
<dbReference type="RefSeq" id="YP_406212.1">
    <property type="nucleotide sequence ID" value="NC_007607.1"/>
</dbReference>
<dbReference type="SMR" id="Q326N4"/>
<dbReference type="EnsemblBacteria" id="ABB64724">
    <property type="protein sequence ID" value="ABB64724"/>
    <property type="gene ID" value="SDY_P211"/>
</dbReference>
<dbReference type="KEGG" id="sdy:SDY_P211"/>
<dbReference type="PATRIC" id="fig|300267.13.peg.5765"/>
<dbReference type="HOGENOM" id="CLU_688663_0_0_6"/>
<dbReference type="Proteomes" id="UP000002716">
    <property type="component" value="Plasmid pSD1_197"/>
</dbReference>
<dbReference type="GO" id="GO:0005576">
    <property type="term" value="C:extracellular region"/>
    <property type="evidence" value="ECO:0007669"/>
    <property type="project" value="UniProtKB-SubCell"/>
</dbReference>
<dbReference type="GO" id="GO:0004197">
    <property type="term" value="F:cysteine-type endopeptidase activity"/>
    <property type="evidence" value="ECO:0007669"/>
    <property type="project" value="InterPro"/>
</dbReference>
<dbReference type="GO" id="GO:0006508">
    <property type="term" value="P:proteolysis"/>
    <property type="evidence" value="ECO:0007669"/>
    <property type="project" value="UniProtKB-KW"/>
</dbReference>
<dbReference type="Gene3D" id="3.10.450.460">
    <property type="entry name" value="EspG protein, N-terminal domain"/>
    <property type="match status" value="1"/>
</dbReference>
<dbReference type="InterPro" id="IPR009669">
    <property type="entry name" value="Cys_protease_VirA/EspG"/>
</dbReference>
<dbReference type="InterPro" id="IPR043098">
    <property type="entry name" value="Cys_protease_VirA/EspG_N"/>
</dbReference>
<dbReference type="Pfam" id="PF06872">
    <property type="entry name" value="EspG"/>
    <property type="match status" value="1"/>
</dbReference>
<dbReference type="PIRSF" id="PIRSF011515">
    <property type="entry name" value="EspG"/>
    <property type="match status" value="1"/>
</dbReference>
<keyword id="KW-0378">Hydrolase</keyword>
<keyword id="KW-0614">Plasmid</keyword>
<keyword id="KW-0645">Protease</keyword>
<keyword id="KW-1185">Reference proteome</keyword>
<keyword id="KW-0964">Secreted</keyword>
<keyword id="KW-0788">Thiol protease</keyword>
<keyword id="KW-0843">Virulence</keyword>
<gene>
    <name type="primary">virA</name>
    <name type="ordered locus">SDY_P211</name>
</gene>
<geneLocation type="plasmid">
    <name>pSD1_197</name>
</geneLocation>
<evidence type="ECO:0000250" key="1"/>
<evidence type="ECO:0000255" key="2"/>
<evidence type="ECO:0000305" key="3"/>
<sequence>MQTSNITNYERNDSSWMSTVKSTTEVSWNKLSFCDVLLKIITFGIYSPHETLAEKYSEKKLMDSFSPSLSQDKMDGEFAHANIDGISIRLCLNKGICSVFYLDGDKIQSTQLSSKEYNNLLSSLPPKQFNLGKVHTITAPVSGNFKTHKPAPEVIETAINCCTSIIPNDDYFSVKDTDFNSVWHDIYRDIRASDSNSTKIYFNNIEIPLKLIADLINELGINEFIDSKKELQMLSYNQVNKIINSNFPQQDLCFQTEKLLFTSLFQDPAFISALTSAFWQSLHITSSSVEHIYAQIMSENIENRLNFMPEQRVINNCGHIIKINAVVPKNDTAISASGGRAYEVSSSILPSHITCNGVGINKIETSYLVHAGTLPSSEGLRNAIPPESRQVSFAIISPDV</sequence>
<reference key="1">
    <citation type="journal article" date="2005" name="Nucleic Acids Res.">
        <title>Genome dynamics and diversity of Shigella species, the etiologic agents of bacillary dysentery.</title>
        <authorList>
            <person name="Yang F."/>
            <person name="Yang J."/>
            <person name="Zhang X."/>
            <person name="Chen L."/>
            <person name="Jiang Y."/>
            <person name="Yan Y."/>
            <person name="Tang X."/>
            <person name="Wang J."/>
            <person name="Xiong Z."/>
            <person name="Dong J."/>
            <person name="Xue Y."/>
            <person name="Zhu Y."/>
            <person name="Xu X."/>
            <person name="Sun L."/>
            <person name="Chen S."/>
            <person name="Nie H."/>
            <person name="Peng J."/>
            <person name="Xu J."/>
            <person name="Wang Y."/>
            <person name="Yuan Z."/>
            <person name="Wen Y."/>
            <person name="Yao Z."/>
            <person name="Shen Y."/>
            <person name="Qiang B."/>
            <person name="Hou Y."/>
            <person name="Yu J."/>
            <person name="Jin Q."/>
        </authorList>
    </citation>
    <scope>NUCLEOTIDE SEQUENCE [LARGE SCALE GENOMIC DNA]</scope>
    <source>
        <strain>Sd197</strain>
    </source>
</reference>
<feature type="chain" id="PRO_0000297843" description="Cysteine protease-like VirA">
    <location>
        <begin position="1"/>
        <end position="400"/>
    </location>
</feature>
<feature type="region of interest" description="Tubulin-binding domain" evidence="1">
    <location>
        <begin position="224"/>
        <end position="315"/>
    </location>
</feature>
<feature type="active site" evidence="2">
    <location>
        <position position="34"/>
    </location>
</feature>
<accession>Q326N4</accession>
<comment type="function">
    <text evidence="1">Alpha-tubulin-specific protease that is required for entry into epithelial cells and for subsequent intra- and intercellular spreading. Contributes to bacterial entry into epithelial cells by inducing microtubule (MT) destabilization and the formation of membrane ruffles. The membrane ruffling evoked by VirA results from the activation of host rac1, which is associated with the destruction of MT networks. Creates a tunnel inside the host cell cytoplasm by breaking down the microtubule infrastructure. This facilitates the bacterium's movement through the cytoplasm and also helps other bacteria move faster during the invasion of the eukaryotic cell. Is absolutely required for virulence (By similarity).</text>
</comment>
<comment type="subunit">
    <text evidence="1">Monomer. Interacts specifically with alpha tubulin, a major component of microtubule (By similarity).</text>
</comment>
<comment type="subcellular location">
    <subcellularLocation>
        <location>Secreted</location>
    </subcellularLocation>
    <text evidence="1">Translocated into the host cell via the type III secretion system (T3SS). Localizes in the cytoplasm of the infected cell (By similarity).</text>
</comment>
<comment type="similarity">
    <text evidence="3">Belongs to the protease EspG/VirA family.</text>
</comment>
<proteinExistence type="inferred from homology"/>
<protein>
    <recommendedName>
        <fullName>Cysteine protease-like VirA</fullName>
        <ecNumber>3.4.22.-</ecNumber>
    </recommendedName>
    <alternativeName>
        <fullName>Effector protein VirA</fullName>
    </alternativeName>
</protein>
<name>VIRA_SHIDS</name>